<keyword id="KW-0002">3D-structure</keyword>
<keyword id="KW-0238">DNA-binding</keyword>
<keyword id="KW-1185">Reference proteome</keyword>
<name>SSB_THEMA</name>
<gene>
    <name type="primary">ssb</name>
    <name type="ordered locus">TM_0604</name>
</gene>
<organism>
    <name type="scientific">Thermotoga maritima (strain ATCC 43589 / DSM 3109 / JCM 10099 / NBRC 100826 / MSB8)</name>
    <dbReference type="NCBI Taxonomy" id="243274"/>
    <lineage>
        <taxon>Bacteria</taxon>
        <taxon>Thermotogati</taxon>
        <taxon>Thermotogota</taxon>
        <taxon>Thermotogae</taxon>
        <taxon>Thermotogales</taxon>
        <taxon>Thermotogaceae</taxon>
        <taxon>Thermotoga</taxon>
    </lineage>
</organism>
<protein>
    <recommendedName>
        <fullName evidence="1">Single-stranded DNA-binding protein</fullName>
        <shortName evidence="1">SSB</shortName>
    </recommendedName>
</protein>
<reference key="1">
    <citation type="journal article" date="1999" name="Nature">
        <title>Evidence for lateral gene transfer between Archaea and Bacteria from genome sequence of Thermotoga maritima.</title>
        <authorList>
            <person name="Nelson K.E."/>
            <person name="Clayton R.A."/>
            <person name="Gill S.R."/>
            <person name="Gwinn M.L."/>
            <person name="Dodson R.J."/>
            <person name="Haft D.H."/>
            <person name="Hickey E.K."/>
            <person name="Peterson J.D."/>
            <person name="Nelson W.C."/>
            <person name="Ketchum K.A."/>
            <person name="McDonald L.A."/>
            <person name="Utterback T.R."/>
            <person name="Malek J.A."/>
            <person name="Linher K.D."/>
            <person name="Garrett M.M."/>
            <person name="Stewart A.M."/>
            <person name="Cotton M.D."/>
            <person name="Pratt M.S."/>
            <person name="Phillips C.A."/>
            <person name="Richardson D.L."/>
            <person name="Heidelberg J.F."/>
            <person name="Sutton G.G."/>
            <person name="Fleischmann R.D."/>
            <person name="Eisen J.A."/>
            <person name="White O."/>
            <person name="Salzberg S.L."/>
            <person name="Smith H.O."/>
            <person name="Venter J.C."/>
            <person name="Fraser C.M."/>
        </authorList>
    </citation>
    <scope>NUCLEOTIDE SEQUENCE [LARGE SCALE GENOMIC DNA]</scope>
    <source>
        <strain>ATCC 43589 / DSM 3109 / JCM 10099 / NBRC 100826 / MSB8</strain>
    </source>
</reference>
<dbReference type="EMBL" id="AE000512">
    <property type="protein sequence ID" value="AAD35689.1"/>
    <property type="molecule type" value="Genomic_DNA"/>
</dbReference>
<dbReference type="PIR" id="H72354">
    <property type="entry name" value="H72354"/>
</dbReference>
<dbReference type="RefSeq" id="NP_228414.1">
    <property type="nucleotide sequence ID" value="NC_000853.1"/>
</dbReference>
<dbReference type="RefSeq" id="WP_004081225.1">
    <property type="nucleotide sequence ID" value="NC_000853.1"/>
</dbReference>
<dbReference type="PDB" id="1Z9F">
    <property type="method" value="X-ray"/>
    <property type="resolution" value="2.30 A"/>
    <property type="chains" value="A=1-141"/>
</dbReference>
<dbReference type="PDBsum" id="1Z9F"/>
<dbReference type="SMR" id="Q9WZ73"/>
<dbReference type="FunCoup" id="Q9WZ73">
    <property type="interactions" value="376"/>
</dbReference>
<dbReference type="STRING" id="243274.TM_0604"/>
<dbReference type="PaxDb" id="243274-THEMA_01645"/>
<dbReference type="EnsemblBacteria" id="AAD35689">
    <property type="protein sequence ID" value="AAD35689"/>
    <property type="gene ID" value="TM_0604"/>
</dbReference>
<dbReference type="KEGG" id="tma:TM0604"/>
<dbReference type="KEGG" id="tmi:THEMA_01645"/>
<dbReference type="KEGG" id="tmm:Tmari_0604"/>
<dbReference type="KEGG" id="tmw:THMA_0620"/>
<dbReference type="eggNOG" id="COG0629">
    <property type="taxonomic scope" value="Bacteria"/>
</dbReference>
<dbReference type="InParanoid" id="Q9WZ73"/>
<dbReference type="OrthoDB" id="9809878at2"/>
<dbReference type="EvolutionaryTrace" id="Q9WZ73"/>
<dbReference type="Proteomes" id="UP000008183">
    <property type="component" value="Chromosome"/>
</dbReference>
<dbReference type="GO" id="GO:0009295">
    <property type="term" value="C:nucleoid"/>
    <property type="evidence" value="ECO:0000318"/>
    <property type="project" value="GO_Central"/>
</dbReference>
<dbReference type="GO" id="GO:0008047">
    <property type="term" value="F:enzyme activator activity"/>
    <property type="evidence" value="ECO:0000318"/>
    <property type="project" value="GO_Central"/>
</dbReference>
<dbReference type="GO" id="GO:0003676">
    <property type="term" value="F:nucleic acid binding"/>
    <property type="evidence" value="ECO:0000269"/>
    <property type="project" value="DisProt"/>
</dbReference>
<dbReference type="GO" id="GO:0003697">
    <property type="term" value="F:single-stranded DNA binding"/>
    <property type="evidence" value="ECO:0000318"/>
    <property type="project" value="GO_Central"/>
</dbReference>
<dbReference type="GO" id="GO:0006260">
    <property type="term" value="P:DNA replication"/>
    <property type="evidence" value="ECO:0000318"/>
    <property type="project" value="GO_Central"/>
</dbReference>
<dbReference type="CDD" id="cd04496">
    <property type="entry name" value="SSB_OBF"/>
    <property type="match status" value="1"/>
</dbReference>
<dbReference type="DisProt" id="DP00996"/>
<dbReference type="Gene3D" id="2.40.50.140">
    <property type="entry name" value="Nucleic acid-binding proteins"/>
    <property type="match status" value="1"/>
</dbReference>
<dbReference type="HAMAP" id="MF_00984">
    <property type="entry name" value="SSB"/>
    <property type="match status" value="1"/>
</dbReference>
<dbReference type="InterPro" id="IPR012340">
    <property type="entry name" value="NA-bd_OB-fold"/>
</dbReference>
<dbReference type="InterPro" id="IPR000424">
    <property type="entry name" value="Primosome_PriB/ssb"/>
</dbReference>
<dbReference type="InterPro" id="IPR011344">
    <property type="entry name" value="ssDNA-bd"/>
</dbReference>
<dbReference type="NCBIfam" id="TIGR00621">
    <property type="entry name" value="ssb"/>
    <property type="match status" value="1"/>
</dbReference>
<dbReference type="PANTHER" id="PTHR10302">
    <property type="entry name" value="SINGLE-STRANDED DNA-BINDING PROTEIN"/>
    <property type="match status" value="1"/>
</dbReference>
<dbReference type="PANTHER" id="PTHR10302:SF27">
    <property type="entry name" value="SINGLE-STRANDED DNA-BINDING PROTEIN"/>
    <property type="match status" value="1"/>
</dbReference>
<dbReference type="Pfam" id="PF00436">
    <property type="entry name" value="SSB"/>
    <property type="match status" value="1"/>
</dbReference>
<dbReference type="PIRSF" id="PIRSF002070">
    <property type="entry name" value="SSB"/>
    <property type="match status" value="1"/>
</dbReference>
<dbReference type="SUPFAM" id="SSF50249">
    <property type="entry name" value="Nucleic acid-binding proteins"/>
    <property type="match status" value="1"/>
</dbReference>
<dbReference type="PROSITE" id="PS50935">
    <property type="entry name" value="SSB"/>
    <property type="match status" value="1"/>
</dbReference>
<feature type="chain" id="PRO_0000096128" description="Single-stranded DNA-binding protein">
    <location>
        <begin position="1"/>
        <end position="141"/>
    </location>
</feature>
<feature type="domain" description="SSB" evidence="1">
    <location>
        <begin position="4"/>
        <end position="108"/>
    </location>
</feature>
<feature type="region of interest" description="Disordered" evidence="2">
    <location>
        <begin position="110"/>
        <end position="141"/>
    </location>
</feature>
<feature type="compositionally biased region" description="Acidic residues" evidence="2">
    <location>
        <begin position="116"/>
        <end position="141"/>
    </location>
</feature>
<feature type="strand" evidence="3">
    <location>
        <begin position="7"/>
        <end position="15"/>
    </location>
</feature>
<feature type="strand" evidence="3">
    <location>
        <begin position="18"/>
        <end position="21"/>
    </location>
</feature>
<feature type="strand" evidence="3">
    <location>
        <begin position="27"/>
        <end position="36"/>
    </location>
</feature>
<feature type="strand" evidence="3">
    <location>
        <begin position="50"/>
        <end position="58"/>
    </location>
</feature>
<feature type="helix" evidence="3">
    <location>
        <begin position="59"/>
        <end position="68"/>
    </location>
</feature>
<feature type="strand" evidence="3">
    <location>
        <begin position="74"/>
        <end position="84"/>
    </location>
</feature>
<feature type="strand" evidence="3">
    <location>
        <begin position="96"/>
        <end position="106"/>
    </location>
</feature>
<comment type="subunit">
    <text evidence="1">Homotetramer.</text>
</comment>
<proteinExistence type="evidence at protein level"/>
<evidence type="ECO:0000255" key="1">
    <source>
        <dbReference type="HAMAP-Rule" id="MF_00984"/>
    </source>
</evidence>
<evidence type="ECO:0000256" key="2">
    <source>
        <dbReference type="SAM" id="MobiDB-lite"/>
    </source>
</evidence>
<evidence type="ECO:0007829" key="3">
    <source>
        <dbReference type="PDB" id="1Z9F"/>
    </source>
</evidence>
<sequence>MSFFNKIILIGRLVRDPEERYTLSGTPVTTFTIAVDRVPRKNAPDDAQTTDFFRIVTFGRLAEFARTYLTKGRLVLVEGEMRMRRWETPTGEKRVSPEVVANVVRFMDRKPAETVSETEEELEIPEEDFSSDTFSEDEPPF</sequence>
<accession>Q9WZ73</accession>